<protein>
    <recommendedName>
        <fullName evidence="1">Enolase</fullName>
        <ecNumber evidence="1">4.2.1.11</ecNumber>
    </recommendedName>
    <alternativeName>
        <fullName evidence="1">2-phospho-D-glycerate hydro-lyase</fullName>
    </alternativeName>
    <alternativeName>
        <fullName evidence="1">2-phosphoglycerate dehydratase</fullName>
    </alternativeName>
</protein>
<accession>Q8TQ79</accession>
<reference key="1">
    <citation type="journal article" date="2002" name="Genome Res.">
        <title>The genome of Methanosarcina acetivorans reveals extensive metabolic and physiological diversity.</title>
        <authorList>
            <person name="Galagan J.E."/>
            <person name="Nusbaum C."/>
            <person name="Roy A."/>
            <person name="Endrizzi M.G."/>
            <person name="Macdonald P."/>
            <person name="FitzHugh W."/>
            <person name="Calvo S."/>
            <person name="Engels R."/>
            <person name="Smirnov S."/>
            <person name="Atnoor D."/>
            <person name="Brown A."/>
            <person name="Allen N."/>
            <person name="Naylor J."/>
            <person name="Stange-Thomann N."/>
            <person name="DeArellano K."/>
            <person name="Johnson R."/>
            <person name="Linton L."/>
            <person name="McEwan P."/>
            <person name="McKernan K."/>
            <person name="Talamas J."/>
            <person name="Tirrell A."/>
            <person name="Ye W."/>
            <person name="Zimmer A."/>
            <person name="Barber R.D."/>
            <person name="Cann I."/>
            <person name="Graham D.E."/>
            <person name="Grahame D.A."/>
            <person name="Guss A.M."/>
            <person name="Hedderich R."/>
            <person name="Ingram-Smith C."/>
            <person name="Kuettner H.C."/>
            <person name="Krzycki J.A."/>
            <person name="Leigh J.A."/>
            <person name="Li W."/>
            <person name="Liu J."/>
            <person name="Mukhopadhyay B."/>
            <person name="Reeve J.N."/>
            <person name="Smith K."/>
            <person name="Springer T.A."/>
            <person name="Umayam L.A."/>
            <person name="White O."/>
            <person name="White R.H."/>
            <person name="de Macario E.C."/>
            <person name="Ferry J.G."/>
            <person name="Jarrell K.F."/>
            <person name="Jing H."/>
            <person name="Macario A.J.L."/>
            <person name="Paulsen I.T."/>
            <person name="Pritchett M."/>
            <person name="Sowers K.R."/>
            <person name="Swanson R.V."/>
            <person name="Zinder S.H."/>
            <person name="Lander E."/>
            <person name="Metcalf W.W."/>
            <person name="Birren B."/>
        </authorList>
    </citation>
    <scope>NUCLEOTIDE SEQUENCE [LARGE SCALE GENOMIC DNA]</scope>
    <source>
        <strain>ATCC 35395 / DSM 2834 / JCM 12185 / C2A</strain>
    </source>
</reference>
<keyword id="KW-0963">Cytoplasm</keyword>
<keyword id="KW-0324">Glycolysis</keyword>
<keyword id="KW-0456">Lyase</keyword>
<keyword id="KW-0460">Magnesium</keyword>
<keyword id="KW-0479">Metal-binding</keyword>
<keyword id="KW-1185">Reference proteome</keyword>
<keyword id="KW-0964">Secreted</keyword>
<dbReference type="EC" id="4.2.1.11" evidence="1"/>
<dbReference type="EMBL" id="AE010299">
    <property type="protein sequence ID" value="AAM05080.1"/>
    <property type="molecule type" value="Genomic_DNA"/>
</dbReference>
<dbReference type="SMR" id="Q8TQ79"/>
<dbReference type="FunCoup" id="Q8TQ79">
    <property type="interactions" value="199"/>
</dbReference>
<dbReference type="STRING" id="188937.MA_1672"/>
<dbReference type="EnsemblBacteria" id="AAM05080">
    <property type="protein sequence ID" value="AAM05080"/>
    <property type="gene ID" value="MA_1672"/>
</dbReference>
<dbReference type="KEGG" id="mac:MA_1672"/>
<dbReference type="HOGENOM" id="CLU_031223_2_1_2"/>
<dbReference type="InParanoid" id="Q8TQ79"/>
<dbReference type="PhylomeDB" id="Q8TQ79"/>
<dbReference type="UniPathway" id="UPA00109">
    <property type="reaction ID" value="UER00187"/>
</dbReference>
<dbReference type="Proteomes" id="UP000002487">
    <property type="component" value="Chromosome"/>
</dbReference>
<dbReference type="GO" id="GO:0009986">
    <property type="term" value="C:cell surface"/>
    <property type="evidence" value="ECO:0007669"/>
    <property type="project" value="UniProtKB-SubCell"/>
</dbReference>
<dbReference type="GO" id="GO:0005576">
    <property type="term" value="C:extracellular region"/>
    <property type="evidence" value="ECO:0007669"/>
    <property type="project" value="UniProtKB-SubCell"/>
</dbReference>
<dbReference type="GO" id="GO:0000015">
    <property type="term" value="C:phosphopyruvate hydratase complex"/>
    <property type="evidence" value="ECO:0000318"/>
    <property type="project" value="GO_Central"/>
</dbReference>
<dbReference type="GO" id="GO:0000287">
    <property type="term" value="F:magnesium ion binding"/>
    <property type="evidence" value="ECO:0007669"/>
    <property type="project" value="UniProtKB-UniRule"/>
</dbReference>
<dbReference type="GO" id="GO:0004634">
    <property type="term" value="F:phosphopyruvate hydratase activity"/>
    <property type="evidence" value="ECO:0000318"/>
    <property type="project" value="GO_Central"/>
</dbReference>
<dbReference type="GO" id="GO:0006096">
    <property type="term" value="P:glycolytic process"/>
    <property type="evidence" value="ECO:0000318"/>
    <property type="project" value="GO_Central"/>
</dbReference>
<dbReference type="CDD" id="cd03313">
    <property type="entry name" value="enolase"/>
    <property type="match status" value="1"/>
</dbReference>
<dbReference type="FunFam" id="3.30.390.10:FF:000001">
    <property type="entry name" value="Enolase"/>
    <property type="match status" value="1"/>
</dbReference>
<dbReference type="Gene3D" id="3.20.20.120">
    <property type="entry name" value="Enolase-like C-terminal domain"/>
    <property type="match status" value="1"/>
</dbReference>
<dbReference type="Gene3D" id="3.30.390.10">
    <property type="entry name" value="Enolase-like, N-terminal domain"/>
    <property type="match status" value="1"/>
</dbReference>
<dbReference type="HAMAP" id="MF_00318">
    <property type="entry name" value="Enolase"/>
    <property type="match status" value="1"/>
</dbReference>
<dbReference type="InterPro" id="IPR000941">
    <property type="entry name" value="Enolase"/>
</dbReference>
<dbReference type="InterPro" id="IPR036849">
    <property type="entry name" value="Enolase-like_C_sf"/>
</dbReference>
<dbReference type="InterPro" id="IPR029017">
    <property type="entry name" value="Enolase-like_N"/>
</dbReference>
<dbReference type="InterPro" id="IPR020810">
    <property type="entry name" value="Enolase_C"/>
</dbReference>
<dbReference type="InterPro" id="IPR020809">
    <property type="entry name" value="Enolase_CS"/>
</dbReference>
<dbReference type="InterPro" id="IPR020811">
    <property type="entry name" value="Enolase_N"/>
</dbReference>
<dbReference type="NCBIfam" id="TIGR01060">
    <property type="entry name" value="eno"/>
    <property type="match status" value="1"/>
</dbReference>
<dbReference type="PANTHER" id="PTHR11902">
    <property type="entry name" value="ENOLASE"/>
    <property type="match status" value="1"/>
</dbReference>
<dbReference type="PANTHER" id="PTHR11902:SF1">
    <property type="entry name" value="ENOLASE"/>
    <property type="match status" value="1"/>
</dbReference>
<dbReference type="Pfam" id="PF00113">
    <property type="entry name" value="Enolase_C"/>
    <property type="match status" value="1"/>
</dbReference>
<dbReference type="Pfam" id="PF03952">
    <property type="entry name" value="Enolase_N"/>
    <property type="match status" value="1"/>
</dbReference>
<dbReference type="PIRSF" id="PIRSF001400">
    <property type="entry name" value="Enolase"/>
    <property type="match status" value="1"/>
</dbReference>
<dbReference type="PRINTS" id="PR00148">
    <property type="entry name" value="ENOLASE"/>
</dbReference>
<dbReference type="SFLD" id="SFLDS00001">
    <property type="entry name" value="Enolase"/>
    <property type="match status" value="1"/>
</dbReference>
<dbReference type="SFLD" id="SFLDF00002">
    <property type="entry name" value="enolase"/>
    <property type="match status" value="1"/>
</dbReference>
<dbReference type="SMART" id="SM01192">
    <property type="entry name" value="Enolase_C"/>
    <property type="match status" value="1"/>
</dbReference>
<dbReference type="SMART" id="SM01193">
    <property type="entry name" value="Enolase_N"/>
    <property type="match status" value="1"/>
</dbReference>
<dbReference type="SUPFAM" id="SSF51604">
    <property type="entry name" value="Enolase C-terminal domain-like"/>
    <property type="match status" value="1"/>
</dbReference>
<dbReference type="SUPFAM" id="SSF54826">
    <property type="entry name" value="Enolase N-terminal domain-like"/>
    <property type="match status" value="1"/>
</dbReference>
<dbReference type="PROSITE" id="PS00164">
    <property type="entry name" value="ENOLASE"/>
    <property type="match status" value="1"/>
</dbReference>
<evidence type="ECO:0000255" key="1">
    <source>
        <dbReference type="HAMAP-Rule" id="MF_00318"/>
    </source>
</evidence>
<feature type="chain" id="PRO_0000134023" description="Enolase">
    <location>
        <begin position="1"/>
        <end position="429"/>
    </location>
</feature>
<feature type="active site" description="Proton donor" evidence="1">
    <location>
        <position position="218"/>
    </location>
</feature>
<feature type="active site" description="Proton acceptor" evidence="1">
    <location>
        <position position="346"/>
    </location>
</feature>
<feature type="binding site" evidence="1">
    <location>
        <position position="174"/>
    </location>
    <ligand>
        <name>(2R)-2-phosphoglycerate</name>
        <dbReference type="ChEBI" id="CHEBI:58289"/>
    </ligand>
</feature>
<feature type="binding site" evidence="1">
    <location>
        <position position="254"/>
    </location>
    <ligand>
        <name>Mg(2+)</name>
        <dbReference type="ChEBI" id="CHEBI:18420"/>
    </ligand>
</feature>
<feature type="binding site" evidence="1">
    <location>
        <position position="295"/>
    </location>
    <ligand>
        <name>Mg(2+)</name>
        <dbReference type="ChEBI" id="CHEBI:18420"/>
    </ligand>
</feature>
<feature type="binding site" evidence="1">
    <location>
        <position position="321"/>
    </location>
    <ligand>
        <name>Mg(2+)</name>
        <dbReference type="ChEBI" id="CHEBI:18420"/>
    </ligand>
</feature>
<feature type="binding site" evidence="1">
    <location>
        <position position="346"/>
    </location>
    <ligand>
        <name>(2R)-2-phosphoglycerate</name>
        <dbReference type="ChEBI" id="CHEBI:58289"/>
    </ligand>
</feature>
<feature type="binding site" evidence="1">
    <location>
        <position position="375"/>
    </location>
    <ligand>
        <name>(2R)-2-phosphoglycerate</name>
        <dbReference type="ChEBI" id="CHEBI:58289"/>
    </ligand>
</feature>
<feature type="binding site" evidence="1">
    <location>
        <position position="376"/>
    </location>
    <ligand>
        <name>(2R)-2-phosphoglycerate</name>
        <dbReference type="ChEBI" id="CHEBI:58289"/>
    </ligand>
</feature>
<feature type="binding site" evidence="1">
    <location>
        <position position="397"/>
    </location>
    <ligand>
        <name>(2R)-2-phosphoglycerate</name>
        <dbReference type="ChEBI" id="CHEBI:58289"/>
    </ligand>
</feature>
<name>ENO_METAC</name>
<proteinExistence type="inferred from homology"/>
<comment type="function">
    <text evidence="1">Catalyzes the reversible conversion of 2-phosphoglycerate (2-PG) into phosphoenolpyruvate (PEP). It is essential for the degradation of carbohydrates via glycolysis.</text>
</comment>
<comment type="catalytic activity">
    <reaction evidence="1">
        <text>(2R)-2-phosphoglycerate = phosphoenolpyruvate + H2O</text>
        <dbReference type="Rhea" id="RHEA:10164"/>
        <dbReference type="ChEBI" id="CHEBI:15377"/>
        <dbReference type="ChEBI" id="CHEBI:58289"/>
        <dbReference type="ChEBI" id="CHEBI:58702"/>
        <dbReference type="EC" id="4.2.1.11"/>
    </reaction>
</comment>
<comment type="cofactor">
    <cofactor evidence="1">
        <name>Mg(2+)</name>
        <dbReference type="ChEBI" id="CHEBI:18420"/>
    </cofactor>
    <text evidence="1">Binds a second Mg(2+) ion via substrate during catalysis.</text>
</comment>
<comment type="pathway">
    <text evidence="1">Carbohydrate degradation; glycolysis; pyruvate from D-glyceraldehyde 3-phosphate: step 4/5.</text>
</comment>
<comment type="subcellular location">
    <subcellularLocation>
        <location evidence="1">Cytoplasm</location>
    </subcellularLocation>
    <subcellularLocation>
        <location evidence="1">Secreted</location>
    </subcellularLocation>
    <subcellularLocation>
        <location evidence="1">Cell surface</location>
    </subcellularLocation>
    <text evidence="1">Fractions of enolase are present in both the cytoplasm and on the cell surface.</text>
</comment>
<comment type="similarity">
    <text evidence="1">Belongs to the enolase family.</text>
</comment>
<sequence>MMSYIGLQQDSGEYKIQKIHAREILDSRGNPTIEVDVFTPKGFGRASVPSGASTGTNEALELRDADPNRYGGKGVLTAVKNVNTIIQKELLGLDVRNQREIDELMIELDETENKSNLGANSILGVSMAVAKAAADSLNMPLYRYFGGSNAFTLPVPTMNVLNGGKHAGNELAIQEFMIQPKGAETFYEALQIGAEIYHVLGKYLEKKYGRSSTNVGYEGGYAPKMSESTEALDALVQAIEEAGYTESEVTIGLDAAATEFYEEEFYNIDGKKLAAPELLDYYVELVNSYPILSIEDPFYEEAFEDFEALTNELWDTIIVGDDLFVTNIERLSRGVDMGAANALLLKVNQIGSISEAFDAASMASRNGYTVIVSHRSAETEDTTISDLAVAIGAEMIKTGAPARGERTAKYNQLLRIEEDLGEVAHYVQL</sequence>
<organism>
    <name type="scientific">Methanosarcina acetivorans (strain ATCC 35395 / DSM 2834 / JCM 12185 / C2A)</name>
    <dbReference type="NCBI Taxonomy" id="188937"/>
    <lineage>
        <taxon>Archaea</taxon>
        <taxon>Methanobacteriati</taxon>
        <taxon>Methanobacteriota</taxon>
        <taxon>Stenosarchaea group</taxon>
        <taxon>Methanomicrobia</taxon>
        <taxon>Methanosarcinales</taxon>
        <taxon>Methanosarcinaceae</taxon>
        <taxon>Methanosarcina</taxon>
    </lineage>
</organism>
<gene>
    <name evidence="1" type="primary">eno</name>
    <name type="ordered locus">MA_1672</name>
</gene>